<dbReference type="EMBL" id="M77143">
    <property type="protein sequence ID" value="AAA34441.1"/>
    <property type="molecule type" value="Genomic_DNA"/>
</dbReference>
<dbReference type="EMBL" id="M69021">
    <property type="protein sequence ID" value="AAA35056.1"/>
    <property type="molecule type" value="Genomic_DNA"/>
</dbReference>
<dbReference type="EMBL" id="X75560">
    <property type="protein sequence ID" value="CAA53238.1"/>
    <property type="molecule type" value="Genomic_DNA"/>
</dbReference>
<dbReference type="EMBL" id="Z28079">
    <property type="protein sequence ID" value="CAA81916.1"/>
    <property type="molecule type" value="Genomic_DNA"/>
</dbReference>
<dbReference type="EMBL" id="BK006944">
    <property type="protein sequence ID" value="DAA09078.1"/>
    <property type="molecule type" value="Genomic_DNA"/>
</dbReference>
<dbReference type="PIR" id="S25732">
    <property type="entry name" value="S25732"/>
</dbReference>
<dbReference type="RefSeq" id="NP_012844.1">
    <property type="nucleotide sequence ID" value="NM_001179645.1"/>
</dbReference>
<dbReference type="PDB" id="6IXQ">
    <property type="method" value="X-ray"/>
    <property type="resolution" value="3.06 A"/>
    <property type="chains" value="B=615-650"/>
</dbReference>
<dbReference type="PDBsum" id="6IXQ"/>
<dbReference type="SMR" id="P32364"/>
<dbReference type="BioGRID" id="34053">
    <property type="interactions" value="228"/>
</dbReference>
<dbReference type="DIP" id="DIP-4476N"/>
<dbReference type="FunCoup" id="P32364">
    <property type="interactions" value="139"/>
</dbReference>
<dbReference type="IntAct" id="P32364">
    <property type="interactions" value="3"/>
</dbReference>
<dbReference type="MINT" id="P32364"/>
<dbReference type="STRING" id="4932.YKL079W"/>
<dbReference type="GlyGen" id="P32364">
    <property type="glycosylation" value="1 site, 1 O-linked glycan (1 site)"/>
</dbReference>
<dbReference type="iPTMnet" id="P32364"/>
<dbReference type="PaxDb" id="4932-YKL079W"/>
<dbReference type="PeptideAtlas" id="P32364"/>
<dbReference type="EnsemblFungi" id="YKL079W_mRNA">
    <property type="protein sequence ID" value="YKL079W"/>
    <property type="gene ID" value="YKL079W"/>
</dbReference>
<dbReference type="GeneID" id="853783"/>
<dbReference type="KEGG" id="sce:YKL079W"/>
<dbReference type="AGR" id="SGD:S000001562"/>
<dbReference type="SGD" id="S000001562">
    <property type="gene designation" value="SMY1"/>
</dbReference>
<dbReference type="VEuPathDB" id="FungiDB:YKL079W"/>
<dbReference type="eggNOG" id="KOG0240">
    <property type="taxonomic scope" value="Eukaryota"/>
</dbReference>
<dbReference type="GeneTree" id="ENSGT00940000175167"/>
<dbReference type="HOGENOM" id="CLU_001485_32_0_1"/>
<dbReference type="InParanoid" id="P32364"/>
<dbReference type="OMA" id="DMNVEHE"/>
<dbReference type="OrthoDB" id="3176171at2759"/>
<dbReference type="BioCyc" id="YEAST:G3O-31874-MONOMER"/>
<dbReference type="BioGRID-ORCS" id="853783">
    <property type="hits" value="0 hits in 10 CRISPR screens"/>
</dbReference>
<dbReference type="PRO" id="PR:P32364"/>
<dbReference type="Proteomes" id="UP000002311">
    <property type="component" value="Chromosome XI"/>
</dbReference>
<dbReference type="RNAct" id="P32364">
    <property type="molecule type" value="protein"/>
</dbReference>
<dbReference type="GO" id="GO:0005935">
    <property type="term" value="C:cellular bud neck"/>
    <property type="evidence" value="ECO:0000314"/>
    <property type="project" value="SGD"/>
</dbReference>
<dbReference type="GO" id="GO:0005934">
    <property type="term" value="C:cellular bud tip"/>
    <property type="evidence" value="ECO:0000314"/>
    <property type="project" value="SGD"/>
</dbReference>
<dbReference type="GO" id="GO:0005737">
    <property type="term" value="C:cytoplasm"/>
    <property type="evidence" value="ECO:0000318"/>
    <property type="project" value="GO_Central"/>
</dbReference>
<dbReference type="GO" id="GO:0000131">
    <property type="term" value="C:incipient cellular bud site"/>
    <property type="evidence" value="ECO:0000314"/>
    <property type="project" value="SGD"/>
</dbReference>
<dbReference type="GO" id="GO:0005871">
    <property type="term" value="C:kinesin complex"/>
    <property type="evidence" value="ECO:0000318"/>
    <property type="project" value="GO_Central"/>
</dbReference>
<dbReference type="GO" id="GO:0043332">
    <property type="term" value="C:mating projection tip"/>
    <property type="evidence" value="ECO:0000314"/>
    <property type="project" value="SGD"/>
</dbReference>
<dbReference type="GO" id="GO:0005874">
    <property type="term" value="C:microtubule"/>
    <property type="evidence" value="ECO:0000318"/>
    <property type="project" value="GO_Central"/>
</dbReference>
<dbReference type="GO" id="GO:0005524">
    <property type="term" value="F:ATP binding"/>
    <property type="evidence" value="ECO:0007669"/>
    <property type="project" value="UniProtKB-KW"/>
</dbReference>
<dbReference type="GO" id="GO:0016887">
    <property type="term" value="F:ATP hydrolysis activity"/>
    <property type="evidence" value="ECO:0000318"/>
    <property type="project" value="GO_Central"/>
</dbReference>
<dbReference type="GO" id="GO:0003774">
    <property type="term" value="F:cytoskeletal motor activity"/>
    <property type="evidence" value="ECO:0000315"/>
    <property type="project" value="SGD"/>
</dbReference>
<dbReference type="GO" id="GO:0008017">
    <property type="term" value="F:microtubule binding"/>
    <property type="evidence" value="ECO:0000318"/>
    <property type="project" value="GO_Central"/>
</dbReference>
<dbReference type="GO" id="GO:0008574">
    <property type="term" value="F:plus-end-directed microtubule motor activity"/>
    <property type="evidence" value="ECO:0000318"/>
    <property type="project" value="GO_Central"/>
</dbReference>
<dbReference type="GO" id="GO:0030705">
    <property type="term" value="P:cytoskeleton-dependent intracellular transport"/>
    <property type="evidence" value="ECO:0000318"/>
    <property type="project" value="GO_Central"/>
</dbReference>
<dbReference type="GO" id="GO:0007018">
    <property type="term" value="P:microtubule-based movement"/>
    <property type="evidence" value="ECO:0000318"/>
    <property type="project" value="GO_Central"/>
</dbReference>
<dbReference type="GO" id="GO:0006904">
    <property type="term" value="P:vesicle docking involved in exocytosis"/>
    <property type="evidence" value="ECO:0000316"/>
    <property type="project" value="SGD"/>
</dbReference>
<dbReference type="CDD" id="cd01369">
    <property type="entry name" value="KISc_KHC_KIF5"/>
    <property type="match status" value="1"/>
</dbReference>
<dbReference type="FunFam" id="3.40.850.10:FF:000150">
    <property type="entry name" value="Kinesin-like protein"/>
    <property type="match status" value="1"/>
</dbReference>
<dbReference type="Gene3D" id="3.40.850.10">
    <property type="entry name" value="Kinesin motor domain"/>
    <property type="match status" value="1"/>
</dbReference>
<dbReference type="InterPro" id="IPR027640">
    <property type="entry name" value="Kinesin-like_fam"/>
</dbReference>
<dbReference type="InterPro" id="IPR019821">
    <property type="entry name" value="Kinesin_motor_CS"/>
</dbReference>
<dbReference type="InterPro" id="IPR001752">
    <property type="entry name" value="Kinesin_motor_dom"/>
</dbReference>
<dbReference type="InterPro" id="IPR036961">
    <property type="entry name" value="Kinesin_motor_dom_sf"/>
</dbReference>
<dbReference type="InterPro" id="IPR027417">
    <property type="entry name" value="P-loop_NTPase"/>
</dbReference>
<dbReference type="PANTHER" id="PTHR24115:SF9">
    <property type="entry name" value="KINESIN HEAVY CHAIN"/>
    <property type="match status" value="1"/>
</dbReference>
<dbReference type="PANTHER" id="PTHR24115">
    <property type="entry name" value="KINESIN-RELATED"/>
    <property type="match status" value="1"/>
</dbReference>
<dbReference type="Pfam" id="PF00225">
    <property type="entry name" value="Kinesin"/>
    <property type="match status" value="1"/>
</dbReference>
<dbReference type="PRINTS" id="PR00380">
    <property type="entry name" value="KINESINHEAVY"/>
</dbReference>
<dbReference type="SMART" id="SM00129">
    <property type="entry name" value="KISc"/>
    <property type="match status" value="1"/>
</dbReference>
<dbReference type="SUPFAM" id="SSF52540">
    <property type="entry name" value="P-loop containing nucleoside triphosphate hydrolases"/>
    <property type="match status" value="1"/>
</dbReference>
<dbReference type="PROSITE" id="PS00411">
    <property type="entry name" value="KINESIN_MOTOR_1"/>
    <property type="match status" value="1"/>
</dbReference>
<dbReference type="PROSITE" id="PS50067">
    <property type="entry name" value="KINESIN_MOTOR_2"/>
    <property type="match status" value="1"/>
</dbReference>
<protein>
    <recommendedName>
        <fullName>Kinesin-related protein SMY1</fullName>
    </recommendedName>
    <alternativeName>
        <fullName>Suppressor protein SMY1</fullName>
    </alternativeName>
</protein>
<keyword id="KW-0002">3D-structure</keyword>
<keyword id="KW-0067">ATP-binding</keyword>
<keyword id="KW-0963">Cytoplasm</keyword>
<keyword id="KW-0206">Cytoskeleton</keyword>
<keyword id="KW-0493">Microtubule</keyword>
<keyword id="KW-0505">Motor protein</keyword>
<keyword id="KW-0547">Nucleotide-binding</keyword>
<keyword id="KW-0597">Phosphoprotein</keyword>
<keyword id="KW-1185">Reference proteome</keyword>
<evidence type="ECO:0000255" key="1">
    <source>
        <dbReference type="PROSITE-ProRule" id="PRU00283"/>
    </source>
</evidence>
<evidence type="ECO:0000269" key="2">
    <source>
    </source>
</evidence>
<evidence type="ECO:0000305" key="3"/>
<evidence type="ECO:0007744" key="4">
    <source>
    </source>
</evidence>
<name>SMY1_YEAST</name>
<organism>
    <name type="scientific">Saccharomyces cerevisiae (strain ATCC 204508 / S288c)</name>
    <name type="common">Baker's yeast</name>
    <dbReference type="NCBI Taxonomy" id="559292"/>
    <lineage>
        <taxon>Eukaryota</taxon>
        <taxon>Fungi</taxon>
        <taxon>Dikarya</taxon>
        <taxon>Ascomycota</taxon>
        <taxon>Saccharomycotina</taxon>
        <taxon>Saccharomycetes</taxon>
        <taxon>Saccharomycetales</taxon>
        <taxon>Saccharomycetaceae</taxon>
        <taxon>Saccharomyces</taxon>
    </lineage>
</organism>
<comment type="function">
    <text>Possible microtubule-based motor that can interact or substitute with myosin 2 (MYO2).</text>
</comment>
<comment type="subcellular location">
    <subcellularLocation>
        <location evidence="3">Cytoplasm</location>
        <location evidence="3">Cytoskeleton</location>
    </subcellularLocation>
</comment>
<comment type="miscellaneous">
    <text evidence="2">Present with 1920 molecules/cell in log phase SD medium.</text>
</comment>
<comment type="similarity">
    <text evidence="1">Belongs to the TRAFAC class myosin-kinesin ATPase superfamily. Kinesin family.</text>
</comment>
<reference key="1">
    <citation type="journal article" date="1992" name="Nature">
        <title>Suppression of a myosin defect by a kinesin-related gene.</title>
        <authorList>
            <person name="Lillie S.H."/>
            <person name="Brown S.S."/>
        </authorList>
    </citation>
    <scope>NUCLEOTIDE SEQUENCE [GENOMIC DNA]</scope>
</reference>
<reference key="2">
    <citation type="journal article" date="1994" name="Yeast">
        <title>Sequence analysis of a 10 kb fragment of yeast chromosome XI identifies the SMY1 locus and reveals sequences related to a pre-mRNA splicing factor and vacuolar ATPase subunit C plus a number of unidentified open reading frames.</title>
        <authorList>
            <person name="James C.M."/>
            <person name="Gent M.E."/>
            <person name="Indge K.J."/>
            <person name="Oliver S.G."/>
        </authorList>
    </citation>
    <scope>NUCLEOTIDE SEQUENCE [GENOMIC DNA]</scope>
</reference>
<reference key="3">
    <citation type="journal article" date="1994" name="Nature">
        <title>Complete DNA sequence of yeast chromosome XI.</title>
        <authorList>
            <person name="Dujon B."/>
            <person name="Alexandraki D."/>
            <person name="Andre B."/>
            <person name="Ansorge W."/>
            <person name="Baladron V."/>
            <person name="Ballesta J.P.G."/>
            <person name="Banrevi A."/>
            <person name="Bolle P.-A."/>
            <person name="Bolotin-Fukuhara M."/>
            <person name="Bossier P."/>
            <person name="Bou G."/>
            <person name="Boyer J."/>
            <person name="Buitrago M.J."/>
            <person name="Cheret G."/>
            <person name="Colleaux L."/>
            <person name="Daignan-Fornier B."/>
            <person name="del Rey F."/>
            <person name="Dion C."/>
            <person name="Domdey H."/>
            <person name="Duesterhoeft A."/>
            <person name="Duesterhus S."/>
            <person name="Entian K.-D."/>
            <person name="Erfle H."/>
            <person name="Esteban P.F."/>
            <person name="Feldmann H."/>
            <person name="Fernandes L."/>
            <person name="Fobo G.M."/>
            <person name="Fritz C."/>
            <person name="Fukuhara H."/>
            <person name="Gabel C."/>
            <person name="Gaillon L."/>
            <person name="Garcia-Cantalejo J.M."/>
            <person name="Garcia-Ramirez J.J."/>
            <person name="Gent M.E."/>
            <person name="Ghazvini M."/>
            <person name="Goffeau A."/>
            <person name="Gonzalez A."/>
            <person name="Grothues D."/>
            <person name="Guerreiro P."/>
            <person name="Hegemann J.H."/>
            <person name="Hewitt N."/>
            <person name="Hilger F."/>
            <person name="Hollenberg C.P."/>
            <person name="Horaitis O."/>
            <person name="Indge K.J."/>
            <person name="Jacquier A."/>
            <person name="James C.M."/>
            <person name="Jauniaux J.-C."/>
            <person name="Jimenez A."/>
            <person name="Keuchel H."/>
            <person name="Kirchrath L."/>
            <person name="Kleine K."/>
            <person name="Koetter P."/>
            <person name="Legrain P."/>
            <person name="Liebl S."/>
            <person name="Louis E.J."/>
            <person name="Maia e Silva A."/>
            <person name="Marck C."/>
            <person name="Monnier A.-L."/>
            <person name="Moestl D."/>
            <person name="Mueller S."/>
            <person name="Obermaier B."/>
            <person name="Oliver S.G."/>
            <person name="Pallier C."/>
            <person name="Pascolo S."/>
            <person name="Pfeiffer F."/>
            <person name="Philippsen P."/>
            <person name="Planta R.J."/>
            <person name="Pohl F.M."/>
            <person name="Pohl T.M."/>
            <person name="Poehlmann R."/>
            <person name="Portetelle D."/>
            <person name="Purnelle B."/>
            <person name="Puzos V."/>
            <person name="Ramezani Rad M."/>
            <person name="Rasmussen S.W."/>
            <person name="Remacha M.A."/>
            <person name="Revuelta J.L."/>
            <person name="Richard G.-F."/>
            <person name="Rieger M."/>
            <person name="Rodrigues-Pousada C."/>
            <person name="Rose M."/>
            <person name="Rupp T."/>
            <person name="Santos M.A."/>
            <person name="Schwager C."/>
            <person name="Sensen C."/>
            <person name="Skala J."/>
            <person name="Soares H."/>
            <person name="Sor F."/>
            <person name="Stegemann J."/>
            <person name="Tettelin H."/>
            <person name="Thierry A."/>
            <person name="Tzermia M."/>
            <person name="Urrestarazu L.A."/>
            <person name="van Dyck L."/>
            <person name="van Vliet-Reedijk J.C."/>
            <person name="Valens M."/>
            <person name="Vandenbol M."/>
            <person name="Vilela C."/>
            <person name="Vissers S."/>
            <person name="von Wettstein D."/>
            <person name="Voss H."/>
            <person name="Wiemann S."/>
            <person name="Xu G."/>
            <person name="Zimmermann J."/>
            <person name="Haasemann M."/>
            <person name="Becker I."/>
            <person name="Mewes H.-W."/>
        </authorList>
    </citation>
    <scope>NUCLEOTIDE SEQUENCE [LARGE SCALE GENOMIC DNA]</scope>
    <source>
        <strain>ATCC 204508 / S288c</strain>
    </source>
</reference>
<reference key="4">
    <citation type="journal article" date="2014" name="G3 (Bethesda)">
        <title>The reference genome sequence of Saccharomyces cerevisiae: Then and now.</title>
        <authorList>
            <person name="Engel S.R."/>
            <person name="Dietrich F.S."/>
            <person name="Fisk D.G."/>
            <person name="Binkley G."/>
            <person name="Balakrishnan R."/>
            <person name="Costanzo M.C."/>
            <person name="Dwight S.S."/>
            <person name="Hitz B.C."/>
            <person name="Karra K."/>
            <person name="Nash R.S."/>
            <person name="Weng S."/>
            <person name="Wong E.D."/>
            <person name="Lloyd P."/>
            <person name="Skrzypek M.S."/>
            <person name="Miyasato S.R."/>
            <person name="Simison M."/>
            <person name="Cherry J.M."/>
        </authorList>
    </citation>
    <scope>GENOME REANNOTATION</scope>
    <source>
        <strain>ATCC 204508 / S288c</strain>
    </source>
</reference>
<reference key="5">
    <citation type="journal article" date="1992" name="J. Biol. Chem.">
        <title>Cloning and mutational analysis of the gene encoding subunit C of yeast vacuolar H(+)-ATPase.</title>
        <authorList>
            <person name="Beltran C."/>
            <person name="Kopecky J."/>
            <person name="Pan Y.-C.E."/>
            <person name="Nelson H."/>
            <person name="Nelson N."/>
        </authorList>
    </citation>
    <scope>NUCLEOTIDE SEQUENCE [GENOMIC DNA] OF 1-185</scope>
</reference>
<reference key="6">
    <citation type="journal article" date="2003" name="Nature">
        <title>Global analysis of protein expression in yeast.</title>
        <authorList>
            <person name="Ghaemmaghami S."/>
            <person name="Huh W.-K."/>
            <person name="Bower K."/>
            <person name="Howson R.W."/>
            <person name="Belle A."/>
            <person name="Dephoure N."/>
            <person name="O'Shea E.K."/>
            <person name="Weissman J.S."/>
        </authorList>
    </citation>
    <scope>LEVEL OF PROTEIN EXPRESSION [LARGE SCALE ANALYSIS]</scope>
</reference>
<reference key="7">
    <citation type="journal article" date="2007" name="J. Proteome Res.">
        <title>Large-scale phosphorylation analysis of alpha-factor-arrested Saccharomyces cerevisiae.</title>
        <authorList>
            <person name="Li X."/>
            <person name="Gerber S.A."/>
            <person name="Rudner A.D."/>
            <person name="Beausoleil S.A."/>
            <person name="Haas W."/>
            <person name="Villen J."/>
            <person name="Elias J.E."/>
            <person name="Gygi S.P."/>
        </authorList>
    </citation>
    <scope>IDENTIFICATION BY MASS SPECTROMETRY [LARGE SCALE ANALYSIS]</scope>
    <source>
        <strain>ADR376</strain>
    </source>
</reference>
<reference key="8">
    <citation type="journal article" date="2007" name="Proc. Natl. Acad. Sci. U.S.A.">
        <title>Analysis of phosphorylation sites on proteins from Saccharomyces cerevisiae by electron transfer dissociation (ETD) mass spectrometry.</title>
        <authorList>
            <person name="Chi A."/>
            <person name="Huttenhower C."/>
            <person name="Geer L.Y."/>
            <person name="Coon J.J."/>
            <person name="Syka J.E.P."/>
            <person name="Bai D.L."/>
            <person name="Shabanowitz J."/>
            <person name="Burke D.J."/>
            <person name="Troyanskaya O.G."/>
            <person name="Hunt D.F."/>
        </authorList>
    </citation>
    <scope>IDENTIFICATION BY MASS SPECTROMETRY [LARGE SCALE ANALYSIS]</scope>
</reference>
<reference key="9">
    <citation type="journal article" date="2009" name="Science">
        <title>Global analysis of Cdk1 substrate phosphorylation sites provides insights into evolution.</title>
        <authorList>
            <person name="Holt L.J."/>
            <person name="Tuch B.B."/>
            <person name="Villen J."/>
            <person name="Johnson A.D."/>
            <person name="Gygi S.P."/>
            <person name="Morgan D.O."/>
        </authorList>
    </citation>
    <scope>PHOSPHORYLATION [LARGE SCALE ANALYSIS] AT THR-583</scope>
    <scope>IDENTIFICATION BY MASS SPECTROMETRY [LARGE SCALE ANALYSIS]</scope>
</reference>
<gene>
    <name type="primary">SMY1</name>
    <name type="ordered locus">YKL079W</name>
    <name type="ORF">YKL409</name>
</gene>
<feature type="chain" id="PRO_0000125454" description="Kinesin-related protein SMY1">
    <location>
        <begin position="1"/>
        <end position="656"/>
    </location>
</feature>
<feature type="domain" description="Kinesin motor" evidence="1">
    <location>
        <begin position="27"/>
        <end position="364"/>
    </location>
</feature>
<feature type="binding site" evidence="1">
    <location>
        <begin position="114"/>
        <end position="121"/>
    </location>
    <ligand>
        <name>ATP</name>
        <dbReference type="ChEBI" id="CHEBI:30616"/>
    </ligand>
</feature>
<feature type="modified residue" description="Phosphothreonine" evidence="4">
    <location>
        <position position="583"/>
    </location>
</feature>
<proteinExistence type="evidence at protein level"/>
<sequence>MHWNIISKEQSSSSVSLPTLDSSEPCHIEVILRAIPEKGLQNNESTFKIDPYENTVLFRTNNPLHETTKETHSTFQFDKVFDANATQEDVQKFLVHPIINDVLNGYNGTVITYGPSFSGKSYSLIGSKESEGILPNICKTLFDTLEKNEETKGDSFSVSVLAFEIYMEKTYDLLVPLPERKPLKLHRSSSKMDLEIKDICPAHVGSYEDLRSYIQAVQNVGNRMACGDKTERSRSHLVFQLHVEQRNRKDDILKNSSLYLVDLHGAEKFDKRTESTLSQDALKKLNQSIEALKNTVRSLSMKERDSAYSAKGSHSSAYRESQLTEVLKDSLGGNRKTKVILTCFLSNVPTTLSTLEFGDSIRQINNKVTDNTTGLNLKKKMDLFIQDMKIKDDNYVAQINILKAEIDSLKSLHNKSLPEDDEKKMLENTKKENIKLKLQLDSITQLLSSSTNEDPNNRIDEEVSEILTKRCEQIAQLELSFDRQMNSNSKLQQELEYKKSKEEALESMNVRLLEQIQLQEREIQELLTTNAILKGELETHTKLTETRSERIKSLESSVKELSLNKSAIPSPRRGSMSSSSGNTMLHIEEGSEISNSPWSANTSSKPLVWGARKVSSSSIATTGSQESFVARPFKKGLNLHSIKVTSSTPKSPSSGS</sequence>
<accession>P32364</accession>
<accession>D6VXK8</accession>